<comment type="function">
    <text evidence="1">Part of the ABC transporter complex TagGH involved in teichoic acids export. Responsible for energy coupling to the transport system.</text>
</comment>
<comment type="catalytic activity">
    <reaction evidence="1">
        <text>ATP + H2O + teichoic acidSide 1 = ADP + phosphate + teichoic acidSide 2.</text>
        <dbReference type="EC" id="7.5.2.4"/>
    </reaction>
</comment>
<comment type="subunit">
    <text evidence="1">The complex is composed of two ATP-binding proteins (TagH) and two transmembrane proteins (TagG).</text>
</comment>
<comment type="subcellular location">
    <subcellularLocation>
        <location evidence="1">Cell membrane</location>
        <topology evidence="1">Peripheral membrane protein</topology>
    </subcellularLocation>
</comment>
<comment type="similarity">
    <text evidence="1">Belongs to the ABC transporter superfamily. Teichoic acids exporter (TC 3.A.1.104.1) family.</text>
</comment>
<accession>Q81K31</accession>
<accession>Q6HQN1</accession>
<accession>Q6KK04</accession>
<name>TAGH_BACAN</name>
<dbReference type="EC" id="7.5.2.4" evidence="1"/>
<dbReference type="EMBL" id="AE016879">
    <property type="protein sequence ID" value="AAP29155.1"/>
    <property type="molecule type" value="Genomic_DNA"/>
</dbReference>
<dbReference type="EMBL" id="AE017334">
    <property type="protein sequence ID" value="AAT34652.1"/>
    <property type="molecule type" value="Genomic_DNA"/>
</dbReference>
<dbReference type="EMBL" id="AE017225">
    <property type="protein sequence ID" value="AAT57407.1"/>
    <property type="molecule type" value="Genomic_DNA"/>
</dbReference>
<dbReference type="RefSeq" id="NP_847669.1">
    <property type="nucleotide sequence ID" value="NC_003997.3"/>
</dbReference>
<dbReference type="RefSeq" id="WP_001108294.1">
    <property type="nucleotide sequence ID" value="NZ_WXXJ01000017.1"/>
</dbReference>
<dbReference type="RefSeq" id="YP_031357.1">
    <property type="nucleotide sequence ID" value="NC_005945.1"/>
</dbReference>
<dbReference type="SMR" id="Q81K31"/>
<dbReference type="STRING" id="261594.GBAA_5510"/>
<dbReference type="DNASU" id="1085154"/>
<dbReference type="GeneID" id="45025099"/>
<dbReference type="KEGG" id="ban:BA_5510"/>
<dbReference type="KEGG" id="bar:GBAA_5510"/>
<dbReference type="KEGG" id="bat:BAS5118"/>
<dbReference type="PATRIC" id="fig|198094.11.peg.5469"/>
<dbReference type="eggNOG" id="COG1134">
    <property type="taxonomic scope" value="Bacteria"/>
</dbReference>
<dbReference type="HOGENOM" id="CLU_000604_94_0_9"/>
<dbReference type="OMA" id="EWIQVTL"/>
<dbReference type="OrthoDB" id="9778870at2"/>
<dbReference type="Proteomes" id="UP000000427">
    <property type="component" value="Chromosome"/>
</dbReference>
<dbReference type="Proteomes" id="UP000000594">
    <property type="component" value="Chromosome"/>
</dbReference>
<dbReference type="GO" id="GO:0005886">
    <property type="term" value="C:plasma membrane"/>
    <property type="evidence" value="ECO:0007669"/>
    <property type="project" value="UniProtKB-SubCell"/>
</dbReference>
<dbReference type="GO" id="GO:0015438">
    <property type="term" value="F:ABC-type teichoic acid transporter activity"/>
    <property type="evidence" value="ECO:0007669"/>
    <property type="project" value="UniProtKB-EC"/>
</dbReference>
<dbReference type="GO" id="GO:0005524">
    <property type="term" value="F:ATP binding"/>
    <property type="evidence" value="ECO:0007669"/>
    <property type="project" value="UniProtKB-KW"/>
</dbReference>
<dbReference type="GO" id="GO:0016887">
    <property type="term" value="F:ATP hydrolysis activity"/>
    <property type="evidence" value="ECO:0007669"/>
    <property type="project" value="InterPro"/>
</dbReference>
<dbReference type="CDD" id="cd03220">
    <property type="entry name" value="ABC_KpsT_Wzt"/>
    <property type="match status" value="1"/>
</dbReference>
<dbReference type="FunFam" id="3.40.50.300:FF:003010">
    <property type="entry name" value="Teichoic acids export ATP-binding protein TagH"/>
    <property type="match status" value="1"/>
</dbReference>
<dbReference type="Gene3D" id="3.40.50.300">
    <property type="entry name" value="P-loop containing nucleotide triphosphate hydrolases"/>
    <property type="match status" value="1"/>
</dbReference>
<dbReference type="Gene3D" id="2.30.30.40">
    <property type="entry name" value="SH3 Domains"/>
    <property type="match status" value="1"/>
</dbReference>
<dbReference type="InterPro" id="IPR003593">
    <property type="entry name" value="AAA+_ATPase"/>
</dbReference>
<dbReference type="InterPro" id="IPR003439">
    <property type="entry name" value="ABC_transporter-like_ATP-bd"/>
</dbReference>
<dbReference type="InterPro" id="IPR017871">
    <property type="entry name" value="ABC_transporter-like_CS"/>
</dbReference>
<dbReference type="InterPro" id="IPR015860">
    <property type="entry name" value="ABC_transpr_TagH-like"/>
</dbReference>
<dbReference type="InterPro" id="IPR050683">
    <property type="entry name" value="Bact_Polysacc_Export_ATP-bd"/>
</dbReference>
<dbReference type="InterPro" id="IPR027417">
    <property type="entry name" value="P-loop_NTPase"/>
</dbReference>
<dbReference type="InterPro" id="IPR003646">
    <property type="entry name" value="SH3-like_bac-type"/>
</dbReference>
<dbReference type="NCBIfam" id="NF010065">
    <property type="entry name" value="PRK13545.1"/>
    <property type="match status" value="1"/>
</dbReference>
<dbReference type="NCBIfam" id="NF010066">
    <property type="entry name" value="PRK13546.1"/>
    <property type="match status" value="1"/>
</dbReference>
<dbReference type="PANTHER" id="PTHR46743">
    <property type="entry name" value="TEICHOIC ACIDS EXPORT ATP-BINDING PROTEIN TAGH"/>
    <property type="match status" value="1"/>
</dbReference>
<dbReference type="PANTHER" id="PTHR46743:SF2">
    <property type="entry name" value="TEICHOIC ACIDS EXPORT ATP-BINDING PROTEIN TAGH"/>
    <property type="match status" value="1"/>
</dbReference>
<dbReference type="Pfam" id="PF00005">
    <property type="entry name" value="ABC_tran"/>
    <property type="match status" value="1"/>
</dbReference>
<dbReference type="Pfam" id="PF08239">
    <property type="entry name" value="SH3_3"/>
    <property type="match status" value="1"/>
</dbReference>
<dbReference type="SMART" id="SM00382">
    <property type="entry name" value="AAA"/>
    <property type="match status" value="1"/>
</dbReference>
<dbReference type="SMART" id="SM00287">
    <property type="entry name" value="SH3b"/>
    <property type="match status" value="1"/>
</dbReference>
<dbReference type="SUPFAM" id="SSF52540">
    <property type="entry name" value="P-loop containing nucleoside triphosphate hydrolases"/>
    <property type="match status" value="1"/>
</dbReference>
<dbReference type="PROSITE" id="PS00211">
    <property type="entry name" value="ABC_TRANSPORTER_1"/>
    <property type="match status" value="1"/>
</dbReference>
<dbReference type="PROSITE" id="PS50893">
    <property type="entry name" value="ABC_TRANSPORTER_2"/>
    <property type="match status" value="1"/>
</dbReference>
<dbReference type="PROSITE" id="PS51781">
    <property type="entry name" value="SH3B"/>
    <property type="match status" value="1"/>
</dbReference>
<dbReference type="PROSITE" id="PS51251">
    <property type="entry name" value="TAGH"/>
    <property type="match status" value="1"/>
</dbReference>
<sequence>MNYKVKFEHVTKKYKLYNKPFDKLKDLFFRSKDGEYHYALNNISFEVPEGEIVGIVGLNGSGKSTLSNLIAGVTMPNKGTVDIKGSAALIAISSGLNGQLTGIENIELKGLMMGITKEKIKEIIPEIIDFADIGKFMYQPVKTYSSGMKSRLGFAISVHINPDILVIDEALSVGDQTFTKKCLDKMNEFKEQGKTIFFISHSLSQVKSFCTKALWLHYGQVKEYGDIKEIVDHYDEFLKKYNQMSVEERKDLRKEQISQFQHGLLQEDQTGRERKRKKGKKTSRKFKKKRVLITGVCIALLTGIISTGYYYKNLLPFNSENKYAEKVASKENVTESKQMVKKEKGAAKYIVNSNGISIREEADASSKRLAIANFGDIFTISDSNKNEKKDVEWIQITLSNGEIGWISTKFIEPFKSNNNIIEDAKLADVTALLKRVYGGNMVSAPTYFGKTLNELETTYPQPLNPLPSMTGKTIVKDGNIQFGISQDKVVEVVFQDISMSIAKLHELLGKESLSNDAEKNYFYETKSYYIAARSDQTHKEIQSISIVKK</sequence>
<reference key="1">
    <citation type="journal article" date="2003" name="Nature">
        <title>The genome sequence of Bacillus anthracis Ames and comparison to closely related bacteria.</title>
        <authorList>
            <person name="Read T.D."/>
            <person name="Peterson S.N."/>
            <person name="Tourasse N.J."/>
            <person name="Baillie L.W."/>
            <person name="Paulsen I.T."/>
            <person name="Nelson K.E."/>
            <person name="Tettelin H."/>
            <person name="Fouts D.E."/>
            <person name="Eisen J.A."/>
            <person name="Gill S.R."/>
            <person name="Holtzapple E.K."/>
            <person name="Okstad O.A."/>
            <person name="Helgason E."/>
            <person name="Rilstone J."/>
            <person name="Wu M."/>
            <person name="Kolonay J.F."/>
            <person name="Beanan M.J."/>
            <person name="Dodson R.J."/>
            <person name="Brinkac L.M."/>
            <person name="Gwinn M.L."/>
            <person name="DeBoy R.T."/>
            <person name="Madpu R."/>
            <person name="Daugherty S.C."/>
            <person name="Durkin A.S."/>
            <person name="Haft D.H."/>
            <person name="Nelson W.C."/>
            <person name="Peterson J.D."/>
            <person name="Pop M."/>
            <person name="Khouri H.M."/>
            <person name="Radune D."/>
            <person name="Benton J.L."/>
            <person name="Mahamoud Y."/>
            <person name="Jiang L."/>
            <person name="Hance I.R."/>
            <person name="Weidman J.F."/>
            <person name="Berry K.J."/>
            <person name="Plaut R.D."/>
            <person name="Wolf A.M."/>
            <person name="Watkins K.L."/>
            <person name="Nierman W.C."/>
            <person name="Hazen A."/>
            <person name="Cline R.T."/>
            <person name="Redmond C."/>
            <person name="Thwaite J.E."/>
            <person name="White O."/>
            <person name="Salzberg S.L."/>
            <person name="Thomason B."/>
            <person name="Friedlander A.M."/>
            <person name="Koehler T.M."/>
            <person name="Hanna P.C."/>
            <person name="Kolstoe A.-B."/>
            <person name="Fraser C.M."/>
        </authorList>
    </citation>
    <scope>NUCLEOTIDE SEQUENCE [LARGE SCALE GENOMIC DNA]</scope>
    <source>
        <strain>Ames / isolate Porton</strain>
    </source>
</reference>
<reference key="2">
    <citation type="journal article" date="2009" name="J. Bacteriol.">
        <title>The complete genome sequence of Bacillus anthracis Ames 'Ancestor'.</title>
        <authorList>
            <person name="Ravel J."/>
            <person name="Jiang L."/>
            <person name="Stanley S.T."/>
            <person name="Wilson M.R."/>
            <person name="Decker R.S."/>
            <person name="Read T.D."/>
            <person name="Worsham P."/>
            <person name="Keim P.S."/>
            <person name="Salzberg S.L."/>
            <person name="Fraser-Liggett C.M."/>
            <person name="Rasko D.A."/>
        </authorList>
    </citation>
    <scope>NUCLEOTIDE SEQUENCE [LARGE SCALE GENOMIC DNA]</scope>
    <source>
        <strain>Ames ancestor</strain>
    </source>
</reference>
<reference key="3">
    <citation type="submission" date="2004-01" db="EMBL/GenBank/DDBJ databases">
        <title>Complete genome sequence of Bacillus anthracis Sterne.</title>
        <authorList>
            <person name="Brettin T.S."/>
            <person name="Bruce D."/>
            <person name="Challacombe J.F."/>
            <person name="Gilna P."/>
            <person name="Han C."/>
            <person name="Hill K."/>
            <person name="Hitchcock P."/>
            <person name="Jackson P."/>
            <person name="Keim P."/>
            <person name="Longmire J."/>
            <person name="Lucas S."/>
            <person name="Okinaka R."/>
            <person name="Richardson P."/>
            <person name="Rubin E."/>
            <person name="Tice H."/>
        </authorList>
    </citation>
    <scope>NUCLEOTIDE SEQUENCE [LARGE SCALE GENOMIC DNA]</scope>
    <source>
        <strain>Sterne</strain>
    </source>
</reference>
<evidence type="ECO:0000255" key="1">
    <source>
        <dbReference type="HAMAP-Rule" id="MF_01715"/>
    </source>
</evidence>
<evidence type="ECO:0000255" key="2">
    <source>
        <dbReference type="PROSITE-ProRule" id="PRU01117"/>
    </source>
</evidence>
<proteinExistence type="inferred from homology"/>
<organism>
    <name type="scientific">Bacillus anthracis</name>
    <dbReference type="NCBI Taxonomy" id="1392"/>
    <lineage>
        <taxon>Bacteria</taxon>
        <taxon>Bacillati</taxon>
        <taxon>Bacillota</taxon>
        <taxon>Bacilli</taxon>
        <taxon>Bacillales</taxon>
        <taxon>Bacillaceae</taxon>
        <taxon>Bacillus</taxon>
        <taxon>Bacillus cereus group</taxon>
    </lineage>
</organism>
<keyword id="KW-0067">ATP-binding</keyword>
<keyword id="KW-1003">Cell membrane</keyword>
<keyword id="KW-0472">Membrane</keyword>
<keyword id="KW-0547">Nucleotide-binding</keyword>
<keyword id="KW-1185">Reference proteome</keyword>
<keyword id="KW-1278">Translocase</keyword>
<keyword id="KW-0813">Transport</keyword>
<feature type="chain" id="PRO_0000092984" description="Teichoic acids export ATP-binding protein TagH">
    <location>
        <begin position="1"/>
        <end position="549"/>
    </location>
</feature>
<feature type="domain" description="ABC transporter" evidence="1">
    <location>
        <begin position="22"/>
        <end position="243"/>
    </location>
</feature>
<feature type="domain" description="SH3b" evidence="2">
    <location>
        <begin position="346"/>
        <end position="415"/>
    </location>
</feature>
<feature type="region of interest" description="Unknown">
    <location>
        <begin position="244"/>
        <end position="549"/>
    </location>
</feature>
<feature type="binding site" evidence="1">
    <location>
        <begin position="57"/>
        <end position="64"/>
    </location>
    <ligand>
        <name>ATP</name>
        <dbReference type="ChEBI" id="CHEBI:30616"/>
    </ligand>
</feature>
<gene>
    <name evidence="1" type="primary">tagH</name>
    <name type="ordered locus">BA_5510</name>
    <name type="ordered locus">GBAA_5510</name>
    <name type="ordered locus">BAS5118</name>
</gene>
<protein>
    <recommendedName>
        <fullName evidence="1">Teichoic acids export ATP-binding protein TagH</fullName>
        <ecNumber evidence="1">7.5.2.4</ecNumber>
    </recommendedName>
</protein>